<reference key="1">
    <citation type="journal article" date="2005" name="Science">
        <title>The genome of the basidiomycetous yeast and human pathogen Cryptococcus neoformans.</title>
        <authorList>
            <person name="Loftus B.J."/>
            <person name="Fung E."/>
            <person name="Roncaglia P."/>
            <person name="Rowley D."/>
            <person name="Amedeo P."/>
            <person name="Bruno D."/>
            <person name="Vamathevan J."/>
            <person name="Miranda M."/>
            <person name="Anderson I.J."/>
            <person name="Fraser J.A."/>
            <person name="Allen J.E."/>
            <person name="Bosdet I.E."/>
            <person name="Brent M.R."/>
            <person name="Chiu R."/>
            <person name="Doering T.L."/>
            <person name="Donlin M.J."/>
            <person name="D'Souza C.A."/>
            <person name="Fox D.S."/>
            <person name="Grinberg V."/>
            <person name="Fu J."/>
            <person name="Fukushima M."/>
            <person name="Haas B.J."/>
            <person name="Huang J.C."/>
            <person name="Janbon G."/>
            <person name="Jones S.J.M."/>
            <person name="Koo H.L."/>
            <person name="Krzywinski M.I."/>
            <person name="Kwon-Chung K.J."/>
            <person name="Lengeler K.B."/>
            <person name="Maiti R."/>
            <person name="Marra M.A."/>
            <person name="Marra R.E."/>
            <person name="Mathewson C.A."/>
            <person name="Mitchell T.G."/>
            <person name="Pertea M."/>
            <person name="Riggs F.R."/>
            <person name="Salzberg S.L."/>
            <person name="Schein J.E."/>
            <person name="Shvartsbeyn A."/>
            <person name="Shin H."/>
            <person name="Shumway M."/>
            <person name="Specht C.A."/>
            <person name="Suh B.B."/>
            <person name="Tenney A."/>
            <person name="Utterback T.R."/>
            <person name="Wickes B.L."/>
            <person name="Wortman J.R."/>
            <person name="Wye N.H."/>
            <person name="Kronstad J.W."/>
            <person name="Lodge J.K."/>
            <person name="Heitman J."/>
            <person name="Davis R.W."/>
            <person name="Fraser C.M."/>
            <person name="Hyman R.W."/>
        </authorList>
    </citation>
    <scope>NUCLEOTIDE SEQUENCE [LARGE SCALE GENOMIC DNA]</scope>
    <source>
        <strain>JEC21 / ATCC MYA-565</strain>
    </source>
</reference>
<evidence type="ECO:0000250" key="1">
    <source>
        <dbReference type="UniProtKB" id="O58832"/>
    </source>
</evidence>
<evidence type="ECO:0000250" key="2">
    <source>
        <dbReference type="UniProtKB" id="P40487"/>
    </source>
</evidence>
<evidence type="ECO:0000256" key="3">
    <source>
        <dbReference type="SAM" id="MobiDB-lite"/>
    </source>
</evidence>
<evidence type="ECO:0000305" key="4"/>
<sequence>MPVPVDDSTAVLEPTEGIERPTKPAVKSRKRFVGSSKAATSRPVVRRVANQVPDDILHDKELNAAIAALPGNYNFEIHKTIYHIRRDNVQSVALQMPEGLMMYGCAIADIIERFTGALPMMLADVTYGACCIDDYTAKEMGAEMIVHYGHSCLIPVSQTTLKTLYVFVEIGIDTPHLSLSVRRNFPSSRSAFQRLILGAGEAAPGGKVPIALESTDESAQATPDLSTNDLPTRLALVSTIQFVAATQALRADLETAMPPLEKGEIEQEEEGMVAKVKRGDIGVWRGKYEVTVPQAKPLSPGEVLGCTAPKLNDVDALIYVGDGRFHLESIMIANPTVPAFRYDPYSKKFTREVYDHTEMRGLRGEAVKAARKNLDDQGSGSWAVLLGTLGRQGSLAVLKSIQNSLPADSLPPLLLLLSELSPAKLALLPNSQISTFIQTSCPRLSIDWGYAFSRPLLSPYEASVAVGRVKGWGGLSLDNGKEGGKLEGEGDYPMDFYADNSLGDWTPRHNPPRPRPARVRPQAQGCAQD</sequence>
<proteinExistence type="inferred from homology"/>
<accession>P0CN18</accession>
<accession>Q55YW3</accession>
<accession>Q5KN81</accession>
<name>DPH1_CRYNJ</name>
<organism>
    <name type="scientific">Cryptococcus neoformans var. neoformans serotype D (strain JEC21 / ATCC MYA-565)</name>
    <name type="common">Filobasidiella neoformans</name>
    <dbReference type="NCBI Taxonomy" id="214684"/>
    <lineage>
        <taxon>Eukaryota</taxon>
        <taxon>Fungi</taxon>
        <taxon>Dikarya</taxon>
        <taxon>Basidiomycota</taxon>
        <taxon>Agaricomycotina</taxon>
        <taxon>Tremellomycetes</taxon>
        <taxon>Tremellales</taxon>
        <taxon>Cryptococcaceae</taxon>
        <taxon>Cryptococcus</taxon>
        <taxon>Cryptococcus neoformans species complex</taxon>
    </lineage>
</organism>
<comment type="function">
    <text evidence="2">Catalyzes the first step of diphthamide biosynthesis, a post-translational modification of histidine which occurs in elongation factor 2. DPH1 and DPH2 transfer a 3-amino-3-carboxypropyl (ACP) group from S-adenosyl-L-methionine (SAM) to a histidine residue, the reaction is assisted by a reduction system comprising DPH3 and a NADH-dependent reductase, predominantly CBR1.</text>
</comment>
<comment type="catalytic activity">
    <reaction evidence="2">
        <text>L-histidyl-[translation elongation factor 2] + S-adenosyl-L-methionine = 2-[(3S)-amino-3-carboxypropyl]-L-histidyl-[translation elongation factor 2] + S-methyl-5'-thioadenosine + H(+)</text>
        <dbReference type="Rhea" id="RHEA:36783"/>
        <dbReference type="Rhea" id="RHEA-COMP:9748"/>
        <dbReference type="Rhea" id="RHEA-COMP:9749"/>
        <dbReference type="ChEBI" id="CHEBI:15378"/>
        <dbReference type="ChEBI" id="CHEBI:17509"/>
        <dbReference type="ChEBI" id="CHEBI:29979"/>
        <dbReference type="ChEBI" id="CHEBI:59789"/>
        <dbReference type="ChEBI" id="CHEBI:73995"/>
        <dbReference type="EC" id="2.5.1.108"/>
    </reaction>
</comment>
<comment type="cofactor">
    <cofactor evidence="2">
        <name>[4Fe-4S] cluster</name>
        <dbReference type="ChEBI" id="CHEBI:49883"/>
    </cofactor>
    <text evidence="2">Binds 1 [4Fe-4S] cluster per subunit. The cluster is coordinated with 3 cysteines and an exchangeable S-adenosyl-L-methionine.</text>
</comment>
<comment type="pathway">
    <text>Protein modification; peptidyl-diphthamide biosynthesis.</text>
</comment>
<comment type="subunit">
    <text evidence="2">Component of the 2-(3-amino-3-carboxypropyl)histidine synthase complex composed of DPH1, DPH2, DPH3 and a NADH-dependent reductase, predominantly CBR1.</text>
</comment>
<comment type="subcellular location">
    <subcellularLocation>
        <location evidence="2">Cytoplasm</location>
    </subcellularLocation>
</comment>
<comment type="similarity">
    <text evidence="4">Belongs to the DPH1/DPH2 family. DPH1 subfamily.</text>
</comment>
<protein>
    <recommendedName>
        <fullName evidence="4">2-(3-amino-3-carboxypropyl)histidine synthase subunit 1</fullName>
        <ecNumber evidence="2">2.5.1.108</ecNumber>
    </recommendedName>
    <alternativeName>
        <fullName>Diphthamide biosynthesis protein 1</fullName>
    </alternativeName>
    <alternativeName>
        <fullName evidence="4">Diphtheria toxin resistance protein 1</fullName>
    </alternativeName>
    <alternativeName>
        <fullName evidence="4">S-adenosyl-L-methionine:L-histidine 3-amino-3-carboxypropyltransferase 1</fullName>
    </alternativeName>
</protein>
<gene>
    <name type="primary">DPH1</name>
    <name type="ordered locus">CNA07400</name>
</gene>
<dbReference type="EC" id="2.5.1.108" evidence="2"/>
<dbReference type="EMBL" id="AE017341">
    <property type="protein sequence ID" value="AAW41237.1"/>
    <property type="molecule type" value="Genomic_DNA"/>
</dbReference>
<dbReference type="RefSeq" id="XP_567056.1">
    <property type="nucleotide sequence ID" value="XM_567056.1"/>
</dbReference>
<dbReference type="SMR" id="P0CN18"/>
<dbReference type="FunCoup" id="P0CN18">
    <property type="interactions" value="335"/>
</dbReference>
<dbReference type="STRING" id="214684.P0CN18"/>
<dbReference type="PaxDb" id="214684-P0CN18"/>
<dbReference type="EnsemblFungi" id="AAW41237">
    <property type="protein sequence ID" value="AAW41237"/>
    <property type="gene ID" value="CNA07400"/>
</dbReference>
<dbReference type="GeneID" id="3253746"/>
<dbReference type="KEGG" id="cne:CNA07400"/>
<dbReference type="VEuPathDB" id="FungiDB:CNA07400"/>
<dbReference type="eggNOG" id="KOG2648">
    <property type="taxonomic scope" value="Eukaryota"/>
</dbReference>
<dbReference type="HOGENOM" id="CLU_037146_1_1_1"/>
<dbReference type="InParanoid" id="P0CN18"/>
<dbReference type="OMA" id="PGQVLGC"/>
<dbReference type="OrthoDB" id="1649088at2759"/>
<dbReference type="UniPathway" id="UPA00559"/>
<dbReference type="Proteomes" id="UP000002149">
    <property type="component" value="Chromosome 1"/>
</dbReference>
<dbReference type="GO" id="GO:0120513">
    <property type="term" value="C:2-(3-amino-3-carboxypropyl)histidine synthase complex"/>
    <property type="evidence" value="ECO:0000250"/>
    <property type="project" value="UniProtKB"/>
</dbReference>
<dbReference type="GO" id="GO:0005737">
    <property type="term" value="C:cytoplasm"/>
    <property type="evidence" value="ECO:0007669"/>
    <property type="project" value="UniProtKB-SubCell"/>
</dbReference>
<dbReference type="GO" id="GO:0090560">
    <property type="term" value="F:2-(3-amino-3-carboxypropyl)histidine synthase activity"/>
    <property type="evidence" value="ECO:0007669"/>
    <property type="project" value="UniProtKB-EC"/>
</dbReference>
<dbReference type="GO" id="GO:0051539">
    <property type="term" value="F:4 iron, 4 sulfur cluster binding"/>
    <property type="evidence" value="ECO:0000250"/>
    <property type="project" value="UniProtKB"/>
</dbReference>
<dbReference type="GO" id="GO:0046872">
    <property type="term" value="F:metal ion binding"/>
    <property type="evidence" value="ECO:0007669"/>
    <property type="project" value="UniProtKB-KW"/>
</dbReference>
<dbReference type="GO" id="GO:0017183">
    <property type="term" value="P:protein histidyl modification to diphthamide"/>
    <property type="evidence" value="ECO:0000250"/>
    <property type="project" value="UniProtKB"/>
</dbReference>
<dbReference type="FunFam" id="3.40.50.11840:FF:000001">
    <property type="entry name" value="2-(3-amino-3-carboxypropyl)histidine synthase subunit 1"/>
    <property type="match status" value="1"/>
</dbReference>
<dbReference type="FunFam" id="3.40.50.11850:FF:000006">
    <property type="entry name" value="2-(3-amino-3-carboxypropyl)histidine synthase subunit 1"/>
    <property type="match status" value="1"/>
</dbReference>
<dbReference type="Gene3D" id="3.40.50.11840">
    <property type="entry name" value="Diphthamide synthesis DPH1/DPH2 domain 1"/>
    <property type="match status" value="1"/>
</dbReference>
<dbReference type="Gene3D" id="3.40.50.11850">
    <property type="entry name" value="Diphthamide synthesis DPH1/DPH2 domain 2"/>
    <property type="match status" value="1"/>
</dbReference>
<dbReference type="Gene3D" id="3.40.50.11860">
    <property type="entry name" value="Diphthamide synthesis DPH1/DPH2 domain 3"/>
    <property type="match status" value="1"/>
</dbReference>
<dbReference type="InterPro" id="IPR016435">
    <property type="entry name" value="DPH1/DPH2"/>
</dbReference>
<dbReference type="InterPro" id="IPR042263">
    <property type="entry name" value="DPH1/DPH2_1"/>
</dbReference>
<dbReference type="InterPro" id="IPR042264">
    <property type="entry name" value="DPH1/DPH2_2"/>
</dbReference>
<dbReference type="InterPro" id="IPR042265">
    <property type="entry name" value="DPH1/DPH2_3"/>
</dbReference>
<dbReference type="InterPro" id="IPR035435">
    <property type="entry name" value="DPH1/DPH2_euk_archaea"/>
</dbReference>
<dbReference type="NCBIfam" id="TIGR00322">
    <property type="entry name" value="diphth2_R"/>
    <property type="match status" value="2"/>
</dbReference>
<dbReference type="PANTHER" id="PTHR10762:SF1">
    <property type="entry name" value="2-(3-AMINO-3-CARBOXYPROPYL)HISTIDINE SYNTHASE SUBUNIT 1"/>
    <property type="match status" value="1"/>
</dbReference>
<dbReference type="PANTHER" id="PTHR10762">
    <property type="entry name" value="DIPHTHAMIDE BIOSYNTHESIS PROTEIN"/>
    <property type="match status" value="1"/>
</dbReference>
<dbReference type="Pfam" id="PF01866">
    <property type="entry name" value="Diphthamide_syn"/>
    <property type="match status" value="2"/>
</dbReference>
<dbReference type="PIRSF" id="PIRSF004967">
    <property type="entry name" value="DPH1"/>
    <property type="match status" value="1"/>
</dbReference>
<dbReference type="SFLD" id="SFLDS00032">
    <property type="entry name" value="Radical_SAM_3-amino-3-carboxyp"/>
    <property type="match status" value="1"/>
</dbReference>
<keyword id="KW-0963">Cytoplasm</keyword>
<keyword id="KW-0408">Iron</keyword>
<keyword id="KW-0411">Iron-sulfur</keyword>
<keyword id="KW-0479">Metal-binding</keyword>
<keyword id="KW-1185">Reference proteome</keyword>
<keyword id="KW-0949">S-adenosyl-L-methionine</keyword>
<keyword id="KW-0808">Transferase</keyword>
<feature type="chain" id="PRO_0000083371" description="2-(3-amino-3-carboxypropyl)histidine synthase subunit 1">
    <location>
        <begin position="1"/>
        <end position="529"/>
    </location>
</feature>
<feature type="region of interest" description="Disordered" evidence="3">
    <location>
        <begin position="1"/>
        <end position="38"/>
    </location>
</feature>
<feature type="region of interest" description="Disordered" evidence="3">
    <location>
        <begin position="498"/>
        <end position="529"/>
    </location>
</feature>
<feature type="binding site" evidence="1">
    <location>
        <position position="130"/>
    </location>
    <ligand>
        <name>[4Fe-4S] cluster</name>
        <dbReference type="ChEBI" id="CHEBI:49883"/>
    </ligand>
</feature>
<feature type="binding site" evidence="1">
    <location>
        <position position="306"/>
    </location>
    <ligand>
        <name>[4Fe-4S] cluster</name>
        <dbReference type="ChEBI" id="CHEBI:49883"/>
    </ligand>
</feature>
<feature type="binding site" evidence="1">
    <location>
        <position position="441"/>
    </location>
    <ligand>
        <name>[4Fe-4S] cluster</name>
        <dbReference type="ChEBI" id="CHEBI:49883"/>
    </ligand>
</feature>